<proteinExistence type="inferred from homology"/>
<dbReference type="EMBL" id="CP001396">
    <property type="protein sequence ID" value="ACR62149.1"/>
    <property type="molecule type" value="Genomic_DNA"/>
</dbReference>
<dbReference type="RefSeq" id="WP_000700703.1">
    <property type="nucleotide sequence ID" value="NC_012759.1"/>
</dbReference>
<dbReference type="SMR" id="C4ZWA6"/>
<dbReference type="GeneID" id="93776868"/>
<dbReference type="KEGG" id="ebw:BWG_0490"/>
<dbReference type="HOGENOM" id="CLU_158489_0_0_6"/>
<dbReference type="GO" id="GO:0005737">
    <property type="term" value="C:cytoplasm"/>
    <property type="evidence" value="ECO:0007669"/>
    <property type="project" value="UniProtKB-SubCell"/>
</dbReference>
<dbReference type="HAMAP" id="MF_00805">
    <property type="entry name" value="CitD"/>
    <property type="match status" value="1"/>
</dbReference>
<dbReference type="InterPro" id="IPR006495">
    <property type="entry name" value="CitD"/>
</dbReference>
<dbReference type="InterPro" id="IPR023439">
    <property type="entry name" value="Mal_deCO2ase/Cit_lyase_ACP"/>
</dbReference>
<dbReference type="NCBIfam" id="TIGR01608">
    <property type="entry name" value="citD"/>
    <property type="match status" value="1"/>
</dbReference>
<dbReference type="NCBIfam" id="NF009726">
    <property type="entry name" value="PRK13253.1"/>
    <property type="match status" value="1"/>
</dbReference>
<dbReference type="Pfam" id="PF06857">
    <property type="entry name" value="ACP"/>
    <property type="match status" value="1"/>
</dbReference>
<dbReference type="PIRSF" id="PIRSF002736">
    <property type="entry name" value="Citrt_lyas_gamma"/>
    <property type="match status" value="1"/>
</dbReference>
<evidence type="ECO:0000255" key="1">
    <source>
        <dbReference type="HAMAP-Rule" id="MF_00805"/>
    </source>
</evidence>
<comment type="function">
    <text evidence="1">Covalent carrier of the coenzyme of citrate lyase.</text>
</comment>
<comment type="subunit">
    <text evidence="1">Oligomer with a subunit composition of (alpha,beta,gamma)6.</text>
</comment>
<comment type="subcellular location">
    <subcellularLocation>
        <location evidence="1">Cytoplasm</location>
    </subcellularLocation>
</comment>
<comment type="similarity">
    <text evidence="1">Belongs to the CitD family.</text>
</comment>
<sequence>MKINQPAVAGTLESGDVMIRIAPLDTQDIDLQINSSVEKQFGDAIRTTILDVLARYNVRGVQLNVDDKGALDCILRARLEALLARASGIPALPWEDCQ</sequence>
<protein>
    <recommendedName>
        <fullName evidence="1">Citrate lyase acyl carrier protein</fullName>
    </recommendedName>
    <alternativeName>
        <fullName evidence="1">Citrate lyase gamma chain</fullName>
    </alternativeName>
</protein>
<accession>C4ZWA6</accession>
<feature type="chain" id="PRO_1000213001" description="Citrate lyase acyl carrier protein">
    <location>
        <begin position="1"/>
        <end position="98"/>
    </location>
</feature>
<feature type="modified residue" description="O-(phosphoribosyl dephospho-coenzyme A)serine" evidence="1">
    <location>
        <position position="14"/>
    </location>
</feature>
<organism>
    <name type="scientific">Escherichia coli (strain K12 / MC4100 / BW2952)</name>
    <dbReference type="NCBI Taxonomy" id="595496"/>
    <lineage>
        <taxon>Bacteria</taxon>
        <taxon>Pseudomonadati</taxon>
        <taxon>Pseudomonadota</taxon>
        <taxon>Gammaproteobacteria</taxon>
        <taxon>Enterobacterales</taxon>
        <taxon>Enterobacteriaceae</taxon>
        <taxon>Escherichia</taxon>
    </lineage>
</organism>
<gene>
    <name evidence="1" type="primary">citD</name>
    <name type="ordered locus">BWG_0490</name>
</gene>
<keyword id="KW-0963">Cytoplasm</keyword>
<keyword id="KW-0597">Phosphoprotein</keyword>
<reference key="1">
    <citation type="journal article" date="2009" name="J. Bacteriol.">
        <title>Genomic sequencing reveals regulatory mutations and recombinational events in the widely used MC4100 lineage of Escherichia coli K-12.</title>
        <authorList>
            <person name="Ferenci T."/>
            <person name="Zhou Z."/>
            <person name="Betteridge T."/>
            <person name="Ren Y."/>
            <person name="Liu Y."/>
            <person name="Feng L."/>
            <person name="Reeves P.R."/>
            <person name="Wang L."/>
        </authorList>
    </citation>
    <scope>NUCLEOTIDE SEQUENCE [LARGE SCALE GENOMIC DNA]</scope>
    <source>
        <strain>K12 / MC4100 / BW2952</strain>
    </source>
</reference>
<name>CITD_ECOBW</name>